<name>LEUD_THIDA</name>
<protein>
    <recommendedName>
        <fullName evidence="1">3-isopropylmalate dehydratase small subunit</fullName>
        <ecNumber evidence="1">4.2.1.33</ecNumber>
    </recommendedName>
    <alternativeName>
        <fullName evidence="1">Alpha-IPM isomerase</fullName>
        <shortName evidence="1">IPMI</shortName>
    </alternativeName>
    <alternativeName>
        <fullName evidence="1">Isopropylmalate isomerase</fullName>
    </alternativeName>
</protein>
<accession>Q3SHL2</accession>
<keyword id="KW-0028">Amino-acid biosynthesis</keyword>
<keyword id="KW-0100">Branched-chain amino acid biosynthesis</keyword>
<keyword id="KW-0432">Leucine biosynthesis</keyword>
<keyword id="KW-0456">Lyase</keyword>
<keyword id="KW-1185">Reference proteome</keyword>
<organism>
    <name type="scientific">Thiobacillus denitrificans (strain ATCC 25259 / T1)</name>
    <dbReference type="NCBI Taxonomy" id="292415"/>
    <lineage>
        <taxon>Bacteria</taxon>
        <taxon>Pseudomonadati</taxon>
        <taxon>Pseudomonadota</taxon>
        <taxon>Betaproteobacteria</taxon>
        <taxon>Nitrosomonadales</taxon>
        <taxon>Thiobacillaceae</taxon>
        <taxon>Thiobacillus</taxon>
    </lineage>
</organism>
<reference key="1">
    <citation type="journal article" date="2006" name="J. Bacteriol.">
        <title>The genome sequence of the obligately chemolithoautotrophic, facultatively anaerobic bacterium Thiobacillus denitrificans.</title>
        <authorList>
            <person name="Beller H.R."/>
            <person name="Chain P.S."/>
            <person name="Letain T.E."/>
            <person name="Chakicherla A."/>
            <person name="Larimer F.W."/>
            <person name="Richardson P.M."/>
            <person name="Coleman M.A."/>
            <person name="Wood A.P."/>
            <person name="Kelly D.P."/>
        </authorList>
    </citation>
    <scope>NUCLEOTIDE SEQUENCE [LARGE SCALE GENOMIC DNA]</scope>
    <source>
        <strain>ATCC 25259 / T1</strain>
    </source>
</reference>
<proteinExistence type="inferred from homology"/>
<evidence type="ECO:0000255" key="1">
    <source>
        <dbReference type="HAMAP-Rule" id="MF_01031"/>
    </source>
</evidence>
<gene>
    <name evidence="1" type="primary">leuD</name>
    <name type="ordered locus">Tbd_1921</name>
</gene>
<comment type="function">
    <text evidence="1">Catalyzes the isomerization between 2-isopropylmalate and 3-isopropylmalate, via the formation of 2-isopropylmaleate.</text>
</comment>
<comment type="catalytic activity">
    <reaction evidence="1">
        <text>(2R,3S)-3-isopropylmalate = (2S)-2-isopropylmalate</text>
        <dbReference type="Rhea" id="RHEA:32287"/>
        <dbReference type="ChEBI" id="CHEBI:1178"/>
        <dbReference type="ChEBI" id="CHEBI:35121"/>
        <dbReference type="EC" id="4.2.1.33"/>
    </reaction>
</comment>
<comment type="pathway">
    <text evidence="1">Amino-acid biosynthesis; L-leucine biosynthesis; L-leucine from 3-methyl-2-oxobutanoate: step 2/4.</text>
</comment>
<comment type="subunit">
    <text evidence="1">Heterodimer of LeuC and LeuD.</text>
</comment>
<comment type="similarity">
    <text evidence="1">Belongs to the LeuD family. LeuD type 1 subfamily.</text>
</comment>
<sequence>MQAFTTLDGLVVPLDRANVDTDAIIPKQFLKSIKRAGFGPNLFDEWRYLDHGEPGMDPATRQPNPAFVLNLPRYAGASVLLARDNFGCGSSREHAPWALEDYGIRAIIAPSFADIFYNNCFKNGILPIVLDAAAVDRLFGECEASAGYRLKIDLEQQTVTTPGGEVLRFEVDAGRKHRLLNGLDDIGLTLLQADKIKAYEARRRQEAPWLFA</sequence>
<feature type="chain" id="PRO_0000141904" description="3-isopropylmalate dehydratase small subunit">
    <location>
        <begin position="1"/>
        <end position="212"/>
    </location>
</feature>
<dbReference type="EC" id="4.2.1.33" evidence="1"/>
<dbReference type="EMBL" id="CP000116">
    <property type="protein sequence ID" value="AAZ97874.1"/>
    <property type="molecule type" value="Genomic_DNA"/>
</dbReference>
<dbReference type="RefSeq" id="WP_011312433.1">
    <property type="nucleotide sequence ID" value="NC_007404.1"/>
</dbReference>
<dbReference type="SMR" id="Q3SHL2"/>
<dbReference type="STRING" id="292415.Tbd_1921"/>
<dbReference type="KEGG" id="tbd:Tbd_1921"/>
<dbReference type="eggNOG" id="COG0066">
    <property type="taxonomic scope" value="Bacteria"/>
</dbReference>
<dbReference type="HOGENOM" id="CLU_081378_0_3_4"/>
<dbReference type="OrthoDB" id="9777465at2"/>
<dbReference type="UniPathway" id="UPA00048">
    <property type="reaction ID" value="UER00071"/>
</dbReference>
<dbReference type="Proteomes" id="UP000008291">
    <property type="component" value="Chromosome"/>
</dbReference>
<dbReference type="GO" id="GO:0009316">
    <property type="term" value="C:3-isopropylmalate dehydratase complex"/>
    <property type="evidence" value="ECO:0007669"/>
    <property type="project" value="InterPro"/>
</dbReference>
<dbReference type="GO" id="GO:0003861">
    <property type="term" value="F:3-isopropylmalate dehydratase activity"/>
    <property type="evidence" value="ECO:0007669"/>
    <property type="project" value="UniProtKB-UniRule"/>
</dbReference>
<dbReference type="GO" id="GO:0009098">
    <property type="term" value="P:L-leucine biosynthetic process"/>
    <property type="evidence" value="ECO:0007669"/>
    <property type="project" value="UniProtKB-UniRule"/>
</dbReference>
<dbReference type="CDD" id="cd01577">
    <property type="entry name" value="IPMI_Swivel"/>
    <property type="match status" value="1"/>
</dbReference>
<dbReference type="FunFam" id="3.20.19.10:FF:000003">
    <property type="entry name" value="3-isopropylmalate dehydratase small subunit"/>
    <property type="match status" value="1"/>
</dbReference>
<dbReference type="Gene3D" id="3.20.19.10">
    <property type="entry name" value="Aconitase, domain 4"/>
    <property type="match status" value="1"/>
</dbReference>
<dbReference type="HAMAP" id="MF_01031">
    <property type="entry name" value="LeuD_type1"/>
    <property type="match status" value="1"/>
</dbReference>
<dbReference type="InterPro" id="IPR004431">
    <property type="entry name" value="3-IsopropMal_deHydase_ssu"/>
</dbReference>
<dbReference type="InterPro" id="IPR015928">
    <property type="entry name" value="Aconitase/3IPM_dehydase_swvl"/>
</dbReference>
<dbReference type="InterPro" id="IPR000573">
    <property type="entry name" value="AconitaseA/IPMdHydase_ssu_swvl"/>
</dbReference>
<dbReference type="InterPro" id="IPR033940">
    <property type="entry name" value="IPMI_Swivel"/>
</dbReference>
<dbReference type="InterPro" id="IPR050075">
    <property type="entry name" value="LeuD"/>
</dbReference>
<dbReference type="NCBIfam" id="TIGR00171">
    <property type="entry name" value="leuD"/>
    <property type="match status" value="1"/>
</dbReference>
<dbReference type="NCBIfam" id="NF002458">
    <property type="entry name" value="PRK01641.1"/>
    <property type="match status" value="1"/>
</dbReference>
<dbReference type="PANTHER" id="PTHR43345:SF5">
    <property type="entry name" value="3-ISOPROPYLMALATE DEHYDRATASE SMALL SUBUNIT"/>
    <property type="match status" value="1"/>
</dbReference>
<dbReference type="PANTHER" id="PTHR43345">
    <property type="entry name" value="3-ISOPROPYLMALATE DEHYDRATASE SMALL SUBUNIT 2-RELATED-RELATED"/>
    <property type="match status" value="1"/>
</dbReference>
<dbReference type="Pfam" id="PF00694">
    <property type="entry name" value="Aconitase_C"/>
    <property type="match status" value="1"/>
</dbReference>
<dbReference type="SUPFAM" id="SSF52016">
    <property type="entry name" value="LeuD/IlvD-like"/>
    <property type="match status" value="1"/>
</dbReference>